<name>Y4736_NOSP7</name>
<reference key="1">
    <citation type="journal article" date="2013" name="Plant Physiol.">
        <title>A Nostoc punctiforme Sugar Transporter Necessary to Establish a Cyanobacterium-Plant Symbiosis.</title>
        <authorList>
            <person name="Ekman M."/>
            <person name="Picossi S."/>
            <person name="Campbell E.L."/>
            <person name="Meeks J.C."/>
            <person name="Flores E."/>
        </authorList>
    </citation>
    <scope>NUCLEOTIDE SEQUENCE [LARGE SCALE GENOMIC DNA]</scope>
    <source>
        <strain>ATCC 29133 / PCC 73102</strain>
    </source>
</reference>
<protein>
    <recommendedName>
        <fullName evidence="1">Nucleotide-binding protein Npun_R4736</fullName>
    </recommendedName>
</protein>
<dbReference type="EMBL" id="CP001037">
    <property type="protein sequence ID" value="ACC83088.1"/>
    <property type="molecule type" value="Genomic_DNA"/>
</dbReference>
<dbReference type="RefSeq" id="WP_012411046.1">
    <property type="nucleotide sequence ID" value="NC_010628.1"/>
</dbReference>
<dbReference type="SMR" id="B2IYY1"/>
<dbReference type="EnsemblBacteria" id="ACC83088">
    <property type="protein sequence ID" value="ACC83088"/>
    <property type="gene ID" value="Npun_R4736"/>
</dbReference>
<dbReference type="KEGG" id="npu:Npun_R4736"/>
<dbReference type="eggNOG" id="COG1666">
    <property type="taxonomic scope" value="Bacteria"/>
</dbReference>
<dbReference type="HOGENOM" id="CLU_099839_0_0_3"/>
<dbReference type="OrthoDB" id="9801447at2"/>
<dbReference type="PhylomeDB" id="B2IYY1"/>
<dbReference type="Proteomes" id="UP000001191">
    <property type="component" value="Chromosome"/>
</dbReference>
<dbReference type="GO" id="GO:0005829">
    <property type="term" value="C:cytosol"/>
    <property type="evidence" value="ECO:0007669"/>
    <property type="project" value="TreeGrafter"/>
</dbReference>
<dbReference type="GO" id="GO:0000166">
    <property type="term" value="F:nucleotide binding"/>
    <property type="evidence" value="ECO:0007669"/>
    <property type="project" value="TreeGrafter"/>
</dbReference>
<dbReference type="CDD" id="cd11740">
    <property type="entry name" value="YajQ_like"/>
    <property type="match status" value="1"/>
</dbReference>
<dbReference type="Gene3D" id="3.30.70.860">
    <property type="match status" value="1"/>
</dbReference>
<dbReference type="Gene3D" id="3.30.70.990">
    <property type="entry name" value="YajQ-like, domain 2"/>
    <property type="match status" value="1"/>
</dbReference>
<dbReference type="HAMAP" id="MF_00632">
    <property type="entry name" value="YajQ"/>
    <property type="match status" value="1"/>
</dbReference>
<dbReference type="InterPro" id="IPR007551">
    <property type="entry name" value="DUF520"/>
</dbReference>
<dbReference type="InterPro" id="IPR035571">
    <property type="entry name" value="UPF0234-like_C"/>
</dbReference>
<dbReference type="InterPro" id="IPR035570">
    <property type="entry name" value="UPF0234_N"/>
</dbReference>
<dbReference type="InterPro" id="IPR036183">
    <property type="entry name" value="YajQ-like_sf"/>
</dbReference>
<dbReference type="NCBIfam" id="NF003819">
    <property type="entry name" value="PRK05412.1"/>
    <property type="match status" value="1"/>
</dbReference>
<dbReference type="PANTHER" id="PTHR30476">
    <property type="entry name" value="UPF0234 PROTEIN YAJQ"/>
    <property type="match status" value="1"/>
</dbReference>
<dbReference type="PANTHER" id="PTHR30476:SF0">
    <property type="entry name" value="UPF0234 PROTEIN YAJQ"/>
    <property type="match status" value="1"/>
</dbReference>
<dbReference type="Pfam" id="PF04461">
    <property type="entry name" value="DUF520"/>
    <property type="match status" value="1"/>
</dbReference>
<dbReference type="SUPFAM" id="SSF89963">
    <property type="entry name" value="YajQ-like"/>
    <property type="match status" value="2"/>
</dbReference>
<accession>B2IYY1</accession>
<feature type="chain" id="PRO_1000130638" description="Nucleotide-binding protein Npun_R4736">
    <location>
        <begin position="1"/>
        <end position="163"/>
    </location>
</feature>
<proteinExistence type="inferred from homology"/>
<keyword id="KW-0547">Nucleotide-binding</keyword>
<keyword id="KW-1185">Reference proteome</keyword>
<organism>
    <name type="scientific">Nostoc punctiforme (strain ATCC 29133 / PCC 73102)</name>
    <dbReference type="NCBI Taxonomy" id="63737"/>
    <lineage>
        <taxon>Bacteria</taxon>
        <taxon>Bacillati</taxon>
        <taxon>Cyanobacteriota</taxon>
        <taxon>Cyanophyceae</taxon>
        <taxon>Nostocales</taxon>
        <taxon>Nostocaceae</taxon>
        <taxon>Nostoc</taxon>
    </lineage>
</organism>
<sequence>MASTFSFDIVSDFDRQELVNAVDQVIRDIKGRYDLKDTETTVELVEESINVSTDSEFTLDSVHTILREKAAKRNLSQKIFDFGKVESASGNRVRQEIKLKKGISQEIAKQISKLIRDEFKKVQASIQGDAVRVSAKSKDDLQVVMQRLKQEDYPVALQFTNYR</sequence>
<gene>
    <name type="ordered locus">Npun_R4736</name>
</gene>
<comment type="function">
    <text evidence="1">Nucleotide-binding protein.</text>
</comment>
<comment type="similarity">
    <text evidence="1">Belongs to the YajQ family.</text>
</comment>
<evidence type="ECO:0000255" key="1">
    <source>
        <dbReference type="HAMAP-Rule" id="MF_00632"/>
    </source>
</evidence>